<sequence>MSKFKSLLLLFGTLILLSGCSNIEIFNAKGPVASSQKFLILYSIVFMLVICFVVLGMFAIFIYKYSYNKNAESGKMHHNAIIETIWFVIPIIIVAALAIPTVKTLYDYEKPPKSEKDPMVVYAVSAGYKWFFAYPDEHIETVNTLTIPKDRPVVFKLQAMDTMTSFWIPQLGGQKYAMTGMTMNWTLEASQTGTFRGRNSNFNGEGFSRQTFKVNAVSQKDYDKWVKEVKGKKTLDQDTFDKQLLPSTPNKALEFNGTHMAFVDPAADPEYIFYAYKRFNFELKDPNFTSEENMFKDVSDKPLIPARKAQITNANYKRHGMKLMILGNDEPYNNEFKKDESKNAKEMKKISKDAQDQDNDDHGGGH</sequence>
<proteinExistence type="inferred from homology"/>
<keyword id="KW-1003">Cell membrane</keyword>
<keyword id="KW-0249">Electron transport</keyword>
<keyword id="KW-0449">Lipoprotein</keyword>
<keyword id="KW-0472">Membrane</keyword>
<keyword id="KW-0560">Oxidoreductase</keyword>
<keyword id="KW-0564">Palmitate</keyword>
<keyword id="KW-0679">Respiratory chain</keyword>
<keyword id="KW-0732">Signal</keyword>
<keyword id="KW-0812">Transmembrane</keyword>
<keyword id="KW-1133">Transmembrane helix</keyword>
<keyword id="KW-0813">Transport</keyword>
<comment type="function">
    <text evidence="1">Catalyzes quinol oxidation with the concomitant reduction of oxygen to water. Subunit II transfers the electrons from a quinol to the binuclear center of the catalytic subunit I (By similarity).</text>
</comment>
<comment type="catalytic activity">
    <reaction>
        <text>2 a quinol + O2 = 2 a quinone + 2 H2O</text>
        <dbReference type="Rhea" id="RHEA:55376"/>
        <dbReference type="ChEBI" id="CHEBI:15377"/>
        <dbReference type="ChEBI" id="CHEBI:15379"/>
        <dbReference type="ChEBI" id="CHEBI:24646"/>
        <dbReference type="ChEBI" id="CHEBI:132124"/>
    </reaction>
</comment>
<comment type="subcellular location">
    <subcellularLocation>
        <location evidence="3">Cell membrane</location>
        <topology evidence="1">Multi-pass membrane protein</topology>
    </subcellularLocation>
</comment>
<comment type="similarity">
    <text evidence="5">Belongs to the cytochrome c oxidase subunit 2 family.</text>
</comment>
<evidence type="ECO:0000250" key="1"/>
<evidence type="ECO:0000255" key="2"/>
<evidence type="ECO:0000255" key="3">
    <source>
        <dbReference type="PROSITE-ProRule" id="PRU00303"/>
    </source>
</evidence>
<evidence type="ECO:0000256" key="4">
    <source>
        <dbReference type="SAM" id="MobiDB-lite"/>
    </source>
</evidence>
<evidence type="ECO:0000305" key="5"/>
<protein>
    <recommendedName>
        <fullName>Probable quinol oxidase subunit 2</fullName>
        <ecNumber>1.10.3.-</ecNumber>
    </recommendedName>
    <alternativeName>
        <fullName>Quinol oxidase polypeptide II</fullName>
    </alternativeName>
</protein>
<gene>
    <name type="primary">qoxA</name>
    <name type="ordered locus">SAS0996</name>
</gene>
<dbReference type="EC" id="1.10.3.-"/>
<dbReference type="EMBL" id="BX571857">
    <property type="protein sequence ID" value="CAG42771.1"/>
    <property type="molecule type" value="Genomic_DNA"/>
</dbReference>
<dbReference type="RefSeq" id="WP_000032836.1">
    <property type="nucleotide sequence ID" value="NC_002953.3"/>
</dbReference>
<dbReference type="SMR" id="Q6GAF2"/>
<dbReference type="KEGG" id="sas:SAS0996"/>
<dbReference type="HOGENOM" id="CLU_036876_6_0_9"/>
<dbReference type="GO" id="GO:0005886">
    <property type="term" value="C:plasma membrane"/>
    <property type="evidence" value="ECO:0007669"/>
    <property type="project" value="UniProtKB-SubCell"/>
</dbReference>
<dbReference type="GO" id="GO:0005507">
    <property type="term" value="F:copper ion binding"/>
    <property type="evidence" value="ECO:0007669"/>
    <property type="project" value="InterPro"/>
</dbReference>
<dbReference type="GO" id="GO:0009486">
    <property type="term" value="F:cytochrome bo3 ubiquinol oxidase activity"/>
    <property type="evidence" value="ECO:0007669"/>
    <property type="project" value="InterPro"/>
</dbReference>
<dbReference type="GO" id="GO:0004129">
    <property type="term" value="F:cytochrome-c oxidase activity"/>
    <property type="evidence" value="ECO:0007669"/>
    <property type="project" value="InterPro"/>
</dbReference>
<dbReference type="GO" id="GO:0016682">
    <property type="term" value="F:oxidoreductase activity, acting on diphenols and related substances as donors, oxygen as acceptor"/>
    <property type="evidence" value="ECO:0007669"/>
    <property type="project" value="InterPro"/>
</dbReference>
<dbReference type="GO" id="GO:0042773">
    <property type="term" value="P:ATP synthesis coupled electron transport"/>
    <property type="evidence" value="ECO:0007669"/>
    <property type="project" value="TreeGrafter"/>
</dbReference>
<dbReference type="CDD" id="cd04212">
    <property type="entry name" value="CuRO_UO_II"/>
    <property type="match status" value="1"/>
</dbReference>
<dbReference type="FunFam" id="2.60.40.420:FF:000014">
    <property type="entry name" value="Quinol oxidase subunit 2"/>
    <property type="match status" value="1"/>
</dbReference>
<dbReference type="Gene3D" id="1.10.287.90">
    <property type="match status" value="1"/>
</dbReference>
<dbReference type="Gene3D" id="2.60.40.420">
    <property type="entry name" value="Cupredoxins - blue copper proteins"/>
    <property type="match status" value="1"/>
</dbReference>
<dbReference type="InterPro" id="IPR045187">
    <property type="entry name" value="CcO_II"/>
</dbReference>
<dbReference type="InterPro" id="IPR002429">
    <property type="entry name" value="CcO_II-like_C"/>
</dbReference>
<dbReference type="InterPro" id="IPR008972">
    <property type="entry name" value="Cupredoxin"/>
</dbReference>
<dbReference type="InterPro" id="IPR034227">
    <property type="entry name" value="CuRO_UO_II"/>
</dbReference>
<dbReference type="InterPro" id="IPR011759">
    <property type="entry name" value="Cyt_c_oxidase_su2_TM_dom"/>
</dbReference>
<dbReference type="InterPro" id="IPR036257">
    <property type="entry name" value="Cyt_c_oxidase_su2_TM_sf"/>
</dbReference>
<dbReference type="InterPro" id="IPR006332">
    <property type="entry name" value="QoxA"/>
</dbReference>
<dbReference type="NCBIfam" id="TIGR01432">
    <property type="entry name" value="QOXA"/>
    <property type="match status" value="1"/>
</dbReference>
<dbReference type="PANTHER" id="PTHR22888:SF18">
    <property type="entry name" value="CYTOCHROME BO(3) UBIQUINOL OXIDASE SUBUNIT 2"/>
    <property type="match status" value="1"/>
</dbReference>
<dbReference type="PANTHER" id="PTHR22888">
    <property type="entry name" value="CYTOCHROME C OXIDASE, SUBUNIT II"/>
    <property type="match status" value="1"/>
</dbReference>
<dbReference type="Pfam" id="PF02790">
    <property type="entry name" value="COX2_TM"/>
    <property type="match status" value="1"/>
</dbReference>
<dbReference type="SUPFAM" id="SSF49503">
    <property type="entry name" value="Cupredoxins"/>
    <property type="match status" value="1"/>
</dbReference>
<dbReference type="SUPFAM" id="SSF81464">
    <property type="entry name" value="Cytochrome c oxidase subunit II-like, transmembrane region"/>
    <property type="match status" value="1"/>
</dbReference>
<dbReference type="PROSITE" id="PS50857">
    <property type="entry name" value="COX2_CUA"/>
    <property type="match status" value="1"/>
</dbReference>
<dbReference type="PROSITE" id="PS50999">
    <property type="entry name" value="COX2_TM"/>
    <property type="match status" value="1"/>
</dbReference>
<dbReference type="PROSITE" id="PS51257">
    <property type="entry name" value="PROKAR_LIPOPROTEIN"/>
    <property type="match status" value="1"/>
</dbReference>
<feature type="signal peptide" evidence="3">
    <location>
        <begin position="1"/>
        <end position="19"/>
    </location>
</feature>
<feature type="chain" id="PRO_0000275874" description="Probable quinol oxidase subunit 2">
    <location>
        <begin position="20"/>
        <end position="366"/>
    </location>
</feature>
<feature type="transmembrane region" description="Helical" evidence="2">
    <location>
        <begin position="38"/>
        <end position="58"/>
    </location>
</feature>
<feature type="transmembrane region" description="Helical" evidence="2">
    <location>
        <begin position="80"/>
        <end position="100"/>
    </location>
</feature>
<feature type="region of interest" description="Disordered" evidence="4">
    <location>
        <begin position="330"/>
        <end position="366"/>
    </location>
</feature>
<feature type="compositionally biased region" description="Basic and acidic residues" evidence="4">
    <location>
        <begin position="335"/>
        <end position="366"/>
    </location>
</feature>
<feature type="lipid moiety-binding region" description="N-palmitoyl cysteine" evidence="3">
    <location>
        <position position="20"/>
    </location>
</feature>
<feature type="lipid moiety-binding region" description="S-diacylglycerol cysteine" evidence="3">
    <location>
        <position position="20"/>
    </location>
</feature>
<reference key="1">
    <citation type="journal article" date="2004" name="Proc. Natl. Acad. Sci. U.S.A.">
        <title>Complete genomes of two clinical Staphylococcus aureus strains: evidence for the rapid evolution of virulence and drug resistance.</title>
        <authorList>
            <person name="Holden M.T.G."/>
            <person name="Feil E.J."/>
            <person name="Lindsay J.A."/>
            <person name="Peacock S.J."/>
            <person name="Day N.P.J."/>
            <person name="Enright M.C."/>
            <person name="Foster T.J."/>
            <person name="Moore C.E."/>
            <person name="Hurst L."/>
            <person name="Atkin R."/>
            <person name="Barron A."/>
            <person name="Bason N."/>
            <person name="Bentley S.D."/>
            <person name="Chillingworth C."/>
            <person name="Chillingworth T."/>
            <person name="Churcher C."/>
            <person name="Clark L."/>
            <person name="Corton C."/>
            <person name="Cronin A."/>
            <person name="Doggett J."/>
            <person name="Dowd L."/>
            <person name="Feltwell T."/>
            <person name="Hance Z."/>
            <person name="Harris B."/>
            <person name="Hauser H."/>
            <person name="Holroyd S."/>
            <person name="Jagels K."/>
            <person name="James K.D."/>
            <person name="Lennard N."/>
            <person name="Line A."/>
            <person name="Mayes R."/>
            <person name="Moule S."/>
            <person name="Mungall K."/>
            <person name="Ormond D."/>
            <person name="Quail M.A."/>
            <person name="Rabbinowitsch E."/>
            <person name="Rutherford K.M."/>
            <person name="Sanders M."/>
            <person name="Sharp S."/>
            <person name="Simmonds M."/>
            <person name="Stevens K."/>
            <person name="Whitehead S."/>
            <person name="Barrell B.G."/>
            <person name="Spratt B.G."/>
            <person name="Parkhill J."/>
        </authorList>
    </citation>
    <scope>NUCLEOTIDE SEQUENCE [LARGE SCALE GENOMIC DNA]</scope>
    <source>
        <strain>MSSA476</strain>
    </source>
</reference>
<name>QOX2_STAAS</name>
<accession>Q6GAF2</accession>
<organism>
    <name type="scientific">Staphylococcus aureus (strain MSSA476)</name>
    <dbReference type="NCBI Taxonomy" id="282459"/>
    <lineage>
        <taxon>Bacteria</taxon>
        <taxon>Bacillati</taxon>
        <taxon>Bacillota</taxon>
        <taxon>Bacilli</taxon>
        <taxon>Bacillales</taxon>
        <taxon>Staphylococcaceae</taxon>
        <taxon>Staphylococcus</taxon>
    </lineage>
</organism>